<accession>A4JC40</accession>
<comment type="function">
    <text evidence="1">Required for maturation of urease via the functional incorporation of the urease nickel metallocenter.</text>
</comment>
<comment type="subunit">
    <text evidence="1">UreD, UreF and UreG form a complex that acts as a GTP-hydrolysis-dependent molecular chaperone, activating the urease apoprotein by helping to assemble the nickel containing metallocenter of UreC. The UreE protein probably delivers the nickel.</text>
</comment>
<comment type="subcellular location">
    <subcellularLocation>
        <location evidence="1">Cytoplasm</location>
    </subcellularLocation>
</comment>
<comment type="similarity">
    <text evidence="1">Belongs to the UreF family.</text>
</comment>
<dbReference type="EMBL" id="CP000614">
    <property type="protein sequence ID" value="ABO53843.1"/>
    <property type="molecule type" value="Genomic_DNA"/>
</dbReference>
<dbReference type="SMR" id="A4JC40"/>
<dbReference type="KEGG" id="bvi:Bcep1808_0831"/>
<dbReference type="eggNOG" id="COG0830">
    <property type="taxonomic scope" value="Bacteria"/>
</dbReference>
<dbReference type="HOGENOM" id="CLU_049215_2_1_4"/>
<dbReference type="Proteomes" id="UP000002287">
    <property type="component" value="Chromosome 1"/>
</dbReference>
<dbReference type="GO" id="GO:0005737">
    <property type="term" value="C:cytoplasm"/>
    <property type="evidence" value="ECO:0007669"/>
    <property type="project" value="UniProtKB-SubCell"/>
</dbReference>
<dbReference type="GO" id="GO:0016151">
    <property type="term" value="F:nickel cation binding"/>
    <property type="evidence" value="ECO:0007669"/>
    <property type="project" value="UniProtKB-UniRule"/>
</dbReference>
<dbReference type="Gene3D" id="1.10.4190.10">
    <property type="entry name" value="Urease accessory protein UreF"/>
    <property type="match status" value="1"/>
</dbReference>
<dbReference type="HAMAP" id="MF_01385">
    <property type="entry name" value="UreF"/>
    <property type="match status" value="1"/>
</dbReference>
<dbReference type="InterPro" id="IPR002639">
    <property type="entry name" value="UreF"/>
</dbReference>
<dbReference type="InterPro" id="IPR038277">
    <property type="entry name" value="UreF_sf"/>
</dbReference>
<dbReference type="PANTHER" id="PTHR33620">
    <property type="entry name" value="UREASE ACCESSORY PROTEIN F"/>
    <property type="match status" value="1"/>
</dbReference>
<dbReference type="PANTHER" id="PTHR33620:SF1">
    <property type="entry name" value="UREASE ACCESSORY PROTEIN F"/>
    <property type="match status" value="1"/>
</dbReference>
<dbReference type="Pfam" id="PF01730">
    <property type="entry name" value="UreF"/>
    <property type="match status" value="1"/>
</dbReference>
<dbReference type="PIRSF" id="PIRSF009467">
    <property type="entry name" value="Ureas_acces_UreF"/>
    <property type="match status" value="1"/>
</dbReference>
<sequence>MTTTELVALLHLASPALPIGAFSYSQGFEAALDANLIRDADTARDWIASGLTDVLAHGELPFLAHQLARWHAHDADALARENAWFVASRESAELRRETEQMGWSLAQLCASLEWGDAARRATLAALKPIALPTAFAYAAAAHDAGADATLAAYAFGWVENQTSAALKAVPLGQLAGQRIIVALRGAIDAAVKRALATPPDAVNTFAPQLGILSARHETQYSRLFRS</sequence>
<proteinExistence type="inferred from homology"/>
<protein>
    <recommendedName>
        <fullName evidence="1">Urease accessory protein UreF</fullName>
    </recommendedName>
</protein>
<name>UREF_BURVG</name>
<gene>
    <name evidence="1" type="primary">ureF</name>
    <name type="ordered locus">Bcep1808_0831</name>
</gene>
<feature type="chain" id="PRO_0000344110" description="Urease accessory protein UreF">
    <location>
        <begin position="1"/>
        <end position="226"/>
    </location>
</feature>
<evidence type="ECO:0000255" key="1">
    <source>
        <dbReference type="HAMAP-Rule" id="MF_01385"/>
    </source>
</evidence>
<organism>
    <name type="scientific">Burkholderia vietnamiensis (strain G4 / LMG 22486)</name>
    <name type="common">Burkholderia cepacia (strain R1808)</name>
    <dbReference type="NCBI Taxonomy" id="269482"/>
    <lineage>
        <taxon>Bacteria</taxon>
        <taxon>Pseudomonadati</taxon>
        <taxon>Pseudomonadota</taxon>
        <taxon>Betaproteobacteria</taxon>
        <taxon>Burkholderiales</taxon>
        <taxon>Burkholderiaceae</taxon>
        <taxon>Burkholderia</taxon>
        <taxon>Burkholderia cepacia complex</taxon>
    </lineage>
</organism>
<reference key="1">
    <citation type="submission" date="2007-03" db="EMBL/GenBank/DDBJ databases">
        <title>Complete sequence of chromosome 1 of Burkholderia vietnamiensis G4.</title>
        <authorList>
            <consortium name="US DOE Joint Genome Institute"/>
            <person name="Copeland A."/>
            <person name="Lucas S."/>
            <person name="Lapidus A."/>
            <person name="Barry K."/>
            <person name="Detter J.C."/>
            <person name="Glavina del Rio T."/>
            <person name="Hammon N."/>
            <person name="Israni S."/>
            <person name="Dalin E."/>
            <person name="Tice H."/>
            <person name="Pitluck S."/>
            <person name="Chain P."/>
            <person name="Malfatti S."/>
            <person name="Shin M."/>
            <person name="Vergez L."/>
            <person name="Schmutz J."/>
            <person name="Larimer F."/>
            <person name="Land M."/>
            <person name="Hauser L."/>
            <person name="Kyrpides N."/>
            <person name="Tiedje J."/>
            <person name="Richardson P."/>
        </authorList>
    </citation>
    <scope>NUCLEOTIDE SEQUENCE [LARGE SCALE GENOMIC DNA]</scope>
    <source>
        <strain>G4 / LMG 22486</strain>
    </source>
</reference>
<keyword id="KW-0143">Chaperone</keyword>
<keyword id="KW-0963">Cytoplasm</keyword>
<keyword id="KW-0996">Nickel insertion</keyword>